<sequence>MYYGFDIGGTKIALGVFDSGRQLQWEKRVPTPRDSYDAFLDAVCELVAEADRRFGCKGSVGIGIPGMPETEDGTLYAANVPAASGKPLRADLSARLDRDVRLDNDANCFALSEAWDDEFTQYPLVMGLILGTGVGGGLIFNGKPITGKSYITGEFGHMRLPVDALTMMGLDFPLRRCGCGQHGCIENYLSGRGFAWLYQHYYHQPLQAPEIIALYDQGDEQARAHVERYLDLLAVCLGNILTIVDPDLVVIGGGLSNFPAITTQLAERLPRHLLPVARVPRIERARHGDAGGMRGAAFLHLTD</sequence>
<feature type="chain" id="PRO_0000270102" description="N-acetyl-D-glucosamine kinase">
    <location>
        <begin position="1"/>
        <end position="303"/>
    </location>
</feature>
<feature type="binding site" evidence="1">
    <location>
        <begin position="4"/>
        <end position="11"/>
    </location>
    <ligand>
        <name>ATP</name>
        <dbReference type="ChEBI" id="CHEBI:30616"/>
    </ligand>
</feature>
<feature type="binding site" evidence="1">
    <location>
        <begin position="133"/>
        <end position="140"/>
    </location>
    <ligand>
        <name>ATP</name>
        <dbReference type="ChEBI" id="CHEBI:30616"/>
    </ligand>
</feature>
<feature type="binding site" evidence="1">
    <location>
        <position position="157"/>
    </location>
    <ligand>
        <name>Zn(2+)</name>
        <dbReference type="ChEBI" id="CHEBI:29105"/>
    </ligand>
</feature>
<feature type="binding site" evidence="1">
    <location>
        <position position="177"/>
    </location>
    <ligand>
        <name>Zn(2+)</name>
        <dbReference type="ChEBI" id="CHEBI:29105"/>
    </ligand>
</feature>
<feature type="binding site" evidence="1">
    <location>
        <position position="179"/>
    </location>
    <ligand>
        <name>Zn(2+)</name>
        <dbReference type="ChEBI" id="CHEBI:29105"/>
    </ligand>
</feature>
<feature type="binding site" evidence="1">
    <location>
        <position position="184"/>
    </location>
    <ligand>
        <name>Zn(2+)</name>
        <dbReference type="ChEBI" id="CHEBI:29105"/>
    </ligand>
</feature>
<reference key="1">
    <citation type="journal article" date="2006" name="Mol. Microbiol.">
        <title>Role of pathogenicity island-associated integrases in the genome plasticity of uropathogenic Escherichia coli strain 536.</title>
        <authorList>
            <person name="Hochhut B."/>
            <person name="Wilde C."/>
            <person name="Balling G."/>
            <person name="Middendorf B."/>
            <person name="Dobrindt U."/>
            <person name="Brzuszkiewicz E."/>
            <person name="Gottschalk G."/>
            <person name="Carniel E."/>
            <person name="Hacker J."/>
        </authorList>
    </citation>
    <scope>NUCLEOTIDE SEQUENCE [LARGE SCALE GENOMIC DNA]</scope>
    <source>
        <strain>536 / UPEC</strain>
    </source>
</reference>
<gene>
    <name evidence="1" type="primary">nagK</name>
    <name type="ordered locus">ECP_1113</name>
</gene>
<protein>
    <recommendedName>
        <fullName evidence="1">N-acetyl-D-glucosamine kinase</fullName>
        <ecNumber evidence="1">2.7.1.59</ecNumber>
    </recommendedName>
    <alternativeName>
        <fullName evidence="1">GlcNAc kinase</fullName>
    </alternativeName>
</protein>
<name>NAGK_ECOL5</name>
<organism>
    <name type="scientific">Escherichia coli O6:K15:H31 (strain 536 / UPEC)</name>
    <dbReference type="NCBI Taxonomy" id="362663"/>
    <lineage>
        <taxon>Bacteria</taxon>
        <taxon>Pseudomonadati</taxon>
        <taxon>Pseudomonadota</taxon>
        <taxon>Gammaproteobacteria</taxon>
        <taxon>Enterobacterales</taxon>
        <taxon>Enterobacteriaceae</taxon>
        <taxon>Escherichia</taxon>
    </lineage>
</organism>
<dbReference type="EC" id="2.7.1.59" evidence="1"/>
<dbReference type="EMBL" id="CP000247">
    <property type="protein sequence ID" value="ABG69124.1"/>
    <property type="molecule type" value="Genomic_DNA"/>
</dbReference>
<dbReference type="RefSeq" id="WP_000291301.1">
    <property type="nucleotide sequence ID" value="NC_008253.1"/>
</dbReference>
<dbReference type="SMR" id="Q0TIV5"/>
<dbReference type="KEGG" id="ecp:ECP_1113"/>
<dbReference type="HOGENOM" id="CLU_036604_0_3_6"/>
<dbReference type="UniPathway" id="UPA00544"/>
<dbReference type="Proteomes" id="UP000009182">
    <property type="component" value="Chromosome"/>
</dbReference>
<dbReference type="GO" id="GO:0005524">
    <property type="term" value="F:ATP binding"/>
    <property type="evidence" value="ECO:0007669"/>
    <property type="project" value="UniProtKB-UniRule"/>
</dbReference>
<dbReference type="GO" id="GO:0045127">
    <property type="term" value="F:N-acetylglucosamine kinase activity"/>
    <property type="evidence" value="ECO:0007669"/>
    <property type="project" value="UniProtKB-UniRule"/>
</dbReference>
<dbReference type="GO" id="GO:0008270">
    <property type="term" value="F:zinc ion binding"/>
    <property type="evidence" value="ECO:0007669"/>
    <property type="project" value="UniProtKB-UniRule"/>
</dbReference>
<dbReference type="GO" id="GO:0006044">
    <property type="term" value="P:N-acetylglucosamine metabolic process"/>
    <property type="evidence" value="ECO:0007669"/>
    <property type="project" value="UniProtKB-UniRule"/>
</dbReference>
<dbReference type="GO" id="GO:0009254">
    <property type="term" value="P:peptidoglycan turnover"/>
    <property type="evidence" value="ECO:0007669"/>
    <property type="project" value="UniProtKB-UniRule"/>
</dbReference>
<dbReference type="CDD" id="cd24057">
    <property type="entry name" value="ASKHA_NBD_ROK_NAGK"/>
    <property type="match status" value="1"/>
</dbReference>
<dbReference type="FunFam" id="3.30.420.40:FF:000049">
    <property type="entry name" value="N-acetyl-D-glucosamine kinase"/>
    <property type="match status" value="1"/>
</dbReference>
<dbReference type="FunFam" id="3.30.420.40:FF:000051">
    <property type="entry name" value="N-acetyl-D-glucosamine kinase"/>
    <property type="match status" value="1"/>
</dbReference>
<dbReference type="Gene3D" id="3.30.420.40">
    <property type="match status" value="2"/>
</dbReference>
<dbReference type="HAMAP" id="MF_01271">
    <property type="entry name" value="GlcNAc_kinase"/>
    <property type="match status" value="1"/>
</dbReference>
<dbReference type="InterPro" id="IPR043129">
    <property type="entry name" value="ATPase_NBD"/>
</dbReference>
<dbReference type="InterPro" id="IPR023505">
    <property type="entry name" value="N-acetyl-D-glucosamine_kinase"/>
</dbReference>
<dbReference type="InterPro" id="IPR000600">
    <property type="entry name" value="ROK"/>
</dbReference>
<dbReference type="InterPro" id="IPR049874">
    <property type="entry name" value="ROK_cs"/>
</dbReference>
<dbReference type="NCBIfam" id="NF009835">
    <property type="entry name" value="PRK13310.1"/>
    <property type="match status" value="1"/>
</dbReference>
<dbReference type="PANTHER" id="PTHR18964:SF162">
    <property type="entry name" value="N-ACETYL-D-GLUCOSAMINE KINASE"/>
    <property type="match status" value="1"/>
</dbReference>
<dbReference type="PANTHER" id="PTHR18964">
    <property type="entry name" value="ROK (REPRESSOR, ORF, KINASE) FAMILY"/>
    <property type="match status" value="1"/>
</dbReference>
<dbReference type="Pfam" id="PF00480">
    <property type="entry name" value="ROK"/>
    <property type="match status" value="1"/>
</dbReference>
<dbReference type="SUPFAM" id="SSF53067">
    <property type="entry name" value="Actin-like ATPase domain"/>
    <property type="match status" value="1"/>
</dbReference>
<dbReference type="PROSITE" id="PS01125">
    <property type="entry name" value="ROK"/>
    <property type="match status" value="1"/>
</dbReference>
<proteinExistence type="inferred from homology"/>
<evidence type="ECO:0000255" key="1">
    <source>
        <dbReference type="HAMAP-Rule" id="MF_01271"/>
    </source>
</evidence>
<accession>Q0TIV5</accession>
<comment type="function">
    <text evidence="1">Catalyzes the phosphorylation of N-acetyl-D-glucosamine (GlcNAc) derived from cell-wall degradation, yielding GlcNAc-6-P.</text>
</comment>
<comment type="catalytic activity">
    <reaction evidence="1">
        <text>N-acetyl-D-glucosamine + ATP = N-acetyl-D-glucosamine 6-phosphate + ADP + H(+)</text>
        <dbReference type="Rhea" id="RHEA:17417"/>
        <dbReference type="ChEBI" id="CHEBI:15378"/>
        <dbReference type="ChEBI" id="CHEBI:30616"/>
        <dbReference type="ChEBI" id="CHEBI:57513"/>
        <dbReference type="ChEBI" id="CHEBI:456216"/>
        <dbReference type="ChEBI" id="CHEBI:506227"/>
        <dbReference type="EC" id="2.7.1.59"/>
    </reaction>
</comment>
<comment type="pathway">
    <text evidence="1">Cell wall biogenesis; peptidoglycan recycling.</text>
</comment>
<comment type="similarity">
    <text evidence="1">Belongs to the ROK (NagC/XylR) family. NagK subfamily.</text>
</comment>
<keyword id="KW-0067">ATP-binding</keyword>
<keyword id="KW-0119">Carbohydrate metabolism</keyword>
<keyword id="KW-0418">Kinase</keyword>
<keyword id="KW-0479">Metal-binding</keyword>
<keyword id="KW-0547">Nucleotide-binding</keyword>
<keyword id="KW-0808">Transferase</keyword>
<keyword id="KW-0862">Zinc</keyword>